<proteinExistence type="inferred from homology"/>
<keyword id="KW-0378">Hydrolase</keyword>
<keyword id="KW-0663">Pyridoxal phosphate</keyword>
<name>1A1D_PSEFL</name>
<comment type="function">
    <text>Catalyzes a cyclopropane ring-opening reaction, the irreversible conversion of 1-aminocyclopropane-1-carboxylate (ACC) to ammonia and alpha-ketobutyrate. Allows growth on ACC as a nitrogen source.</text>
</comment>
<comment type="catalytic activity">
    <reaction evidence="1">
        <text>1-aminocyclopropane-1-carboxylate + H2O = 2-oxobutanoate + NH4(+)</text>
        <dbReference type="Rhea" id="RHEA:16933"/>
        <dbReference type="ChEBI" id="CHEBI:15377"/>
        <dbReference type="ChEBI" id="CHEBI:16763"/>
        <dbReference type="ChEBI" id="CHEBI:28938"/>
        <dbReference type="ChEBI" id="CHEBI:58360"/>
        <dbReference type="EC" id="3.5.99.7"/>
    </reaction>
</comment>
<comment type="cofactor">
    <cofactor>
        <name>pyridoxal 5'-phosphate</name>
        <dbReference type="ChEBI" id="CHEBI:597326"/>
    </cofactor>
</comment>
<comment type="subunit">
    <text evidence="1">Homotrimer.</text>
</comment>
<comment type="similarity">
    <text evidence="1">Belongs to the ACC deaminase/D-cysteine desulfhydrase family.</text>
</comment>
<dbReference type="EC" id="3.5.99.7" evidence="1"/>
<dbReference type="EMBL" id="U37103">
    <property type="protein sequence ID" value="AAC44163.1"/>
    <property type="molecule type" value="Genomic_DNA"/>
</dbReference>
<dbReference type="SMR" id="Q51813"/>
<dbReference type="BRENDA" id="3.5.99.7">
    <property type="organism ID" value="5121"/>
</dbReference>
<dbReference type="GO" id="GO:0008660">
    <property type="term" value="F:1-aminocyclopropane-1-carboxylate deaminase activity"/>
    <property type="evidence" value="ECO:0007669"/>
    <property type="project" value="UniProtKB-UniRule"/>
</dbReference>
<dbReference type="GO" id="GO:0019148">
    <property type="term" value="F:D-cysteine desulfhydrase activity"/>
    <property type="evidence" value="ECO:0007669"/>
    <property type="project" value="TreeGrafter"/>
</dbReference>
<dbReference type="GO" id="GO:0030170">
    <property type="term" value="F:pyridoxal phosphate binding"/>
    <property type="evidence" value="ECO:0007669"/>
    <property type="project" value="InterPro"/>
</dbReference>
<dbReference type="GO" id="GO:0018871">
    <property type="term" value="P:1-aminocyclopropane-1-carboxylate metabolic process"/>
    <property type="evidence" value="ECO:0007669"/>
    <property type="project" value="UniProtKB-UniRule"/>
</dbReference>
<dbReference type="GO" id="GO:0009310">
    <property type="term" value="P:amine catabolic process"/>
    <property type="evidence" value="ECO:0007669"/>
    <property type="project" value="InterPro"/>
</dbReference>
<dbReference type="CDD" id="cd06449">
    <property type="entry name" value="ACCD"/>
    <property type="match status" value="1"/>
</dbReference>
<dbReference type="FunFam" id="3.40.50.1100:FF:000048">
    <property type="entry name" value="1-aminocyclopropane-1-carboxylate deaminase"/>
    <property type="match status" value="1"/>
</dbReference>
<dbReference type="Gene3D" id="3.40.50.1100">
    <property type="match status" value="2"/>
</dbReference>
<dbReference type="HAMAP" id="MF_00807">
    <property type="entry name" value="ACC_deaminase"/>
    <property type="match status" value="1"/>
</dbReference>
<dbReference type="InterPro" id="IPR027278">
    <property type="entry name" value="ACCD_DCysDesulf"/>
</dbReference>
<dbReference type="InterPro" id="IPR005965">
    <property type="entry name" value="ACP_carboxylate_deaminase"/>
</dbReference>
<dbReference type="InterPro" id="IPR020601">
    <property type="entry name" value="ACP_carboxylate_deaminase_bac"/>
</dbReference>
<dbReference type="InterPro" id="IPR001926">
    <property type="entry name" value="TrpB-like_PALP"/>
</dbReference>
<dbReference type="InterPro" id="IPR036052">
    <property type="entry name" value="TrpB-like_PALP_sf"/>
</dbReference>
<dbReference type="NCBIfam" id="TIGR01274">
    <property type="entry name" value="ACC_deam"/>
    <property type="match status" value="1"/>
</dbReference>
<dbReference type="PANTHER" id="PTHR43780">
    <property type="entry name" value="1-AMINOCYCLOPROPANE-1-CARBOXYLATE DEAMINASE-RELATED"/>
    <property type="match status" value="1"/>
</dbReference>
<dbReference type="PANTHER" id="PTHR43780:SF2">
    <property type="entry name" value="1-AMINOCYCLOPROPANE-1-CARBOXYLATE DEAMINASE-RELATED"/>
    <property type="match status" value="1"/>
</dbReference>
<dbReference type="Pfam" id="PF00291">
    <property type="entry name" value="PALP"/>
    <property type="match status" value="1"/>
</dbReference>
<dbReference type="PIRSF" id="PIRSF006278">
    <property type="entry name" value="ACCD_DCysDesulf"/>
    <property type="match status" value="1"/>
</dbReference>
<dbReference type="SUPFAM" id="SSF53686">
    <property type="entry name" value="Tryptophan synthase beta subunit-like PLP-dependent enzymes"/>
    <property type="match status" value="1"/>
</dbReference>
<protein>
    <recommendedName>
        <fullName evidence="1">1-aminocyclopropane-1-carboxylate deaminase</fullName>
        <shortName evidence="1">ACC deaminase</shortName>
        <shortName evidence="1">ACCD</shortName>
        <ecNumber evidence="1">3.5.99.7</ecNumber>
    </recommendedName>
</protein>
<sequence>MNLNRFKRYPLTFGPSPITPLKRLSEHLGGKVELYAKREDCNSGLAFGGNKTRKLEYLIPEALEQGCDTLVSIGGIQSNQTRQVAAVAAHLGMKCVLVQENWVNYSDAVYDRVGNIEMSRIMGADVRLDAAGFDIGIRPSWEKAMNDVVERGGKPFPIPAGCSEHPYGGLGFVGFAEEVREQEKQLGFKFDYIVVCSVTGSTQAGMVVGFAADGRSKNVIGIDASAKPEKTKAQILRIARHTAELVELGREITEDDVVLDTPFAYPEYGLPNEGTLEAIRLCGSLEGVLTDPVYEGKSMHGMIEMVRRGEFPEGSKVLYAHLGGAPALNAYSFLFRNG</sequence>
<organism>
    <name type="scientific">Pseudomonas fluorescens</name>
    <dbReference type="NCBI Taxonomy" id="294"/>
    <lineage>
        <taxon>Bacteria</taxon>
        <taxon>Pseudomonadati</taxon>
        <taxon>Pseudomonadota</taxon>
        <taxon>Gammaproteobacteria</taxon>
        <taxon>Pseudomonadales</taxon>
        <taxon>Pseudomonadaceae</taxon>
        <taxon>Pseudomonas</taxon>
    </lineage>
</organism>
<feature type="chain" id="PRO_0000184501" description="1-aminocyclopropane-1-carboxylate deaminase">
    <location>
        <begin position="1"/>
        <end position="338"/>
    </location>
</feature>
<feature type="active site" description="Nucleophile" evidence="1">
    <location>
        <position position="78"/>
    </location>
</feature>
<feature type="modified residue" description="N6-(pyridoxal phosphate)lysine" evidence="1">
    <location>
        <position position="51"/>
    </location>
</feature>
<gene>
    <name evidence="1" type="primary">acdS</name>
</gene>
<reference key="1">
    <citation type="journal article" date="1996" name="FEMS Microbiol. Lett.">
        <title>1-aminocyclopropane-1-carboxylate deaminase genes from Pseudomonas strains.</title>
        <authorList>
            <person name="Campbell B.G."/>
            <person name="Thompson J.A."/>
        </authorList>
    </citation>
    <scope>NUCLEOTIDE SEQUENCE [GENOMIC DNA]</scope>
    <source>
        <strain>17</strain>
    </source>
</reference>
<accession>Q51813</accession>
<evidence type="ECO:0000255" key="1">
    <source>
        <dbReference type="HAMAP-Rule" id="MF_00807"/>
    </source>
</evidence>